<sequence>MQVDLNCDLGEAFGNYSFGGDHQIIPLITSANIACGFHAGDENVMNETVKLAKEHGVGIGAHPGFHDLQGFGRRNIDMAPDEIYTLVAYQLGALSAFSRIHDVKINHVKPHGALYNMGARDKDIAHAIAQAVYDVDPSLILVGLSNTLLISEAEAVGLKTASEVFADRRYESNGQLVSRKESDAVISDTEAAINQVVKMVKDNKVTAKDGTEIDIQADTICVHGDGAHALEFVSKIRERLTKEGISITKLGG</sequence>
<gene>
    <name evidence="1" type="primary">pxpA</name>
    <name type="ordered locus">Sca_2038</name>
</gene>
<proteinExistence type="inferred from homology"/>
<keyword id="KW-0067">ATP-binding</keyword>
<keyword id="KW-0378">Hydrolase</keyword>
<keyword id="KW-0547">Nucleotide-binding</keyword>
<keyword id="KW-1185">Reference proteome</keyword>
<organism>
    <name type="scientific">Staphylococcus carnosus (strain TM300)</name>
    <dbReference type="NCBI Taxonomy" id="396513"/>
    <lineage>
        <taxon>Bacteria</taxon>
        <taxon>Bacillati</taxon>
        <taxon>Bacillota</taxon>
        <taxon>Bacilli</taxon>
        <taxon>Bacillales</taxon>
        <taxon>Staphylococcaceae</taxon>
        <taxon>Staphylococcus</taxon>
    </lineage>
</organism>
<reference key="1">
    <citation type="journal article" date="2009" name="Appl. Environ. Microbiol.">
        <title>Genome analysis of the meat starter culture bacterium Staphylococcus carnosus TM300.</title>
        <authorList>
            <person name="Rosenstein R."/>
            <person name="Nerz C."/>
            <person name="Biswas L."/>
            <person name="Resch A."/>
            <person name="Raddatz G."/>
            <person name="Schuster S.C."/>
            <person name="Goetz F."/>
        </authorList>
    </citation>
    <scope>NUCLEOTIDE SEQUENCE [LARGE SCALE GENOMIC DNA]</scope>
    <source>
        <strain>TM300</strain>
    </source>
</reference>
<feature type="chain" id="PRO_1000200464" description="5-oxoprolinase subunit A">
    <location>
        <begin position="1"/>
        <end position="252"/>
    </location>
</feature>
<protein>
    <recommendedName>
        <fullName evidence="1">5-oxoprolinase subunit A</fullName>
        <shortName evidence="1">5-OPase subunit A</shortName>
        <ecNumber evidence="1">3.5.2.9</ecNumber>
    </recommendedName>
    <alternativeName>
        <fullName evidence="1">5-oxoprolinase (ATP-hydrolyzing) subunit A</fullName>
    </alternativeName>
</protein>
<accession>B9DKJ7</accession>
<name>PXPA_STACT</name>
<comment type="function">
    <text evidence="1">Catalyzes the cleavage of 5-oxoproline to form L-glutamate coupled to the hydrolysis of ATP to ADP and inorganic phosphate.</text>
</comment>
<comment type="catalytic activity">
    <reaction evidence="1">
        <text>5-oxo-L-proline + ATP + 2 H2O = L-glutamate + ADP + phosphate + H(+)</text>
        <dbReference type="Rhea" id="RHEA:10348"/>
        <dbReference type="ChEBI" id="CHEBI:15377"/>
        <dbReference type="ChEBI" id="CHEBI:15378"/>
        <dbReference type="ChEBI" id="CHEBI:29985"/>
        <dbReference type="ChEBI" id="CHEBI:30616"/>
        <dbReference type="ChEBI" id="CHEBI:43474"/>
        <dbReference type="ChEBI" id="CHEBI:58402"/>
        <dbReference type="ChEBI" id="CHEBI:456216"/>
        <dbReference type="EC" id="3.5.2.9"/>
    </reaction>
</comment>
<comment type="subunit">
    <text evidence="1">Forms a complex composed of PxpA, PxpB and PxpC.</text>
</comment>
<comment type="similarity">
    <text evidence="1">Belongs to the LamB/PxpA family.</text>
</comment>
<dbReference type="EC" id="3.5.2.9" evidence="1"/>
<dbReference type="EMBL" id="AM295250">
    <property type="protein sequence ID" value="CAL28943.1"/>
    <property type="molecule type" value="Genomic_DNA"/>
</dbReference>
<dbReference type="RefSeq" id="WP_015901279.1">
    <property type="nucleotide sequence ID" value="NC_012121.1"/>
</dbReference>
<dbReference type="SMR" id="B9DKJ7"/>
<dbReference type="GeneID" id="93794491"/>
<dbReference type="KEGG" id="sca:SCA_2038"/>
<dbReference type="eggNOG" id="COG1540">
    <property type="taxonomic scope" value="Bacteria"/>
</dbReference>
<dbReference type="HOGENOM" id="CLU_069535_0_0_9"/>
<dbReference type="OrthoDB" id="9773478at2"/>
<dbReference type="BioCyc" id="SCAR396513:SCA_RS10305-MONOMER"/>
<dbReference type="Proteomes" id="UP000000444">
    <property type="component" value="Chromosome"/>
</dbReference>
<dbReference type="GO" id="GO:0017168">
    <property type="term" value="F:5-oxoprolinase (ATP-hydrolyzing) activity"/>
    <property type="evidence" value="ECO:0007669"/>
    <property type="project" value="UniProtKB-UniRule"/>
</dbReference>
<dbReference type="GO" id="GO:0005524">
    <property type="term" value="F:ATP binding"/>
    <property type="evidence" value="ECO:0007669"/>
    <property type="project" value="UniProtKB-UniRule"/>
</dbReference>
<dbReference type="GO" id="GO:0005975">
    <property type="term" value="P:carbohydrate metabolic process"/>
    <property type="evidence" value="ECO:0007669"/>
    <property type="project" value="InterPro"/>
</dbReference>
<dbReference type="CDD" id="cd10787">
    <property type="entry name" value="LamB_YcsF_like"/>
    <property type="match status" value="1"/>
</dbReference>
<dbReference type="Gene3D" id="3.20.20.370">
    <property type="entry name" value="Glycoside hydrolase/deacetylase"/>
    <property type="match status" value="1"/>
</dbReference>
<dbReference type="HAMAP" id="MF_00691">
    <property type="entry name" value="PxpA"/>
    <property type="match status" value="1"/>
</dbReference>
<dbReference type="InterPro" id="IPR011330">
    <property type="entry name" value="Glyco_hydro/deAcase_b/a-brl"/>
</dbReference>
<dbReference type="InterPro" id="IPR005501">
    <property type="entry name" value="LamB/YcsF/PxpA-like"/>
</dbReference>
<dbReference type="NCBIfam" id="NF003813">
    <property type="entry name" value="PRK05406.1-2"/>
    <property type="match status" value="1"/>
</dbReference>
<dbReference type="NCBIfam" id="NF003814">
    <property type="entry name" value="PRK05406.1-3"/>
    <property type="match status" value="1"/>
</dbReference>
<dbReference type="NCBIfam" id="NF003816">
    <property type="entry name" value="PRK05406.1-5"/>
    <property type="match status" value="1"/>
</dbReference>
<dbReference type="PANTHER" id="PTHR30292:SF0">
    <property type="entry name" value="5-OXOPROLINASE SUBUNIT A"/>
    <property type="match status" value="1"/>
</dbReference>
<dbReference type="PANTHER" id="PTHR30292">
    <property type="entry name" value="UNCHARACTERIZED PROTEIN YBGL-RELATED"/>
    <property type="match status" value="1"/>
</dbReference>
<dbReference type="Pfam" id="PF03746">
    <property type="entry name" value="LamB_YcsF"/>
    <property type="match status" value="1"/>
</dbReference>
<dbReference type="SUPFAM" id="SSF88713">
    <property type="entry name" value="Glycoside hydrolase/deacetylase"/>
    <property type="match status" value="1"/>
</dbReference>
<evidence type="ECO:0000255" key="1">
    <source>
        <dbReference type="HAMAP-Rule" id="MF_00691"/>
    </source>
</evidence>